<protein>
    <recommendedName>
        <fullName evidence="6">Glycerol-3-phosphate acyltransferase 2, mitochondrial</fullName>
        <shortName>GPAT-2</shortName>
        <ecNumber evidence="2">2.3.1.15</ecNumber>
    </recommendedName>
    <alternativeName>
        <fullName evidence="2">1-acylglycerol-3-phosphate O-acyltransferase GPAT2</fullName>
        <ecNumber evidence="2">2.3.1.51</ecNumber>
    </alternativeName>
    <alternativeName>
        <fullName evidence="2">xGPAT1</fullName>
    </alternativeName>
</protein>
<comment type="function">
    <text evidence="2">Transfers an acyl-group from acyl-ACP to the sn-1 position of glycerol-3-phosphate producing a lysophosphatidic acid (LPA), an essential step for the triacylglycerol (TAG) and glycerophospholipids. In vitro also transfers an acyl-group from acyl-ACP to the LPA producing a phosphatidic acid (PA). Prefers arachidonoyl-CoA as the acyl donor. Required for primary processing step during piRNA biosynthesis. Molecular mechanisms by which it promotes piRNA biosynthesis are unclear and do not involve its acyltransferase activity.</text>
</comment>
<comment type="catalytic activity">
    <reaction evidence="2">
        <text>sn-glycerol 3-phosphate + an acyl-CoA = a 1-acyl-sn-glycero-3-phosphate + CoA</text>
        <dbReference type="Rhea" id="RHEA:15325"/>
        <dbReference type="ChEBI" id="CHEBI:57287"/>
        <dbReference type="ChEBI" id="CHEBI:57597"/>
        <dbReference type="ChEBI" id="CHEBI:57970"/>
        <dbReference type="ChEBI" id="CHEBI:58342"/>
        <dbReference type="EC" id="2.3.1.15"/>
    </reaction>
    <physiologicalReaction direction="left-to-right" evidence="2">
        <dbReference type="Rhea" id="RHEA:15326"/>
    </physiologicalReaction>
</comment>
<comment type="catalytic activity">
    <reaction evidence="2">
        <text>a 1-acyl-sn-glycero-3-phosphate + an acyl-CoA = a 1,2-diacyl-sn-glycero-3-phosphate + CoA</text>
        <dbReference type="Rhea" id="RHEA:19709"/>
        <dbReference type="ChEBI" id="CHEBI:57287"/>
        <dbReference type="ChEBI" id="CHEBI:57970"/>
        <dbReference type="ChEBI" id="CHEBI:58342"/>
        <dbReference type="ChEBI" id="CHEBI:58608"/>
        <dbReference type="EC" id="2.3.1.51"/>
    </reaction>
    <physiologicalReaction direction="left-to-right" evidence="2">
        <dbReference type="Rhea" id="RHEA:19710"/>
    </physiologicalReaction>
</comment>
<comment type="catalytic activity">
    <reaction evidence="2">
        <text>1-(9Z-octadecenoyl)-sn-glycero-3-phosphate + (9Z)-octadecenoyl-CoA = 1,2-di-(9Z-octadecenoyl)-sn-glycero-3-phosphate + CoA</text>
        <dbReference type="Rhea" id="RHEA:37131"/>
        <dbReference type="ChEBI" id="CHEBI:57287"/>
        <dbReference type="ChEBI" id="CHEBI:57387"/>
        <dbReference type="ChEBI" id="CHEBI:74544"/>
        <dbReference type="ChEBI" id="CHEBI:74546"/>
    </reaction>
    <physiologicalReaction direction="left-to-right" evidence="2">
        <dbReference type="Rhea" id="RHEA:37132"/>
    </physiologicalReaction>
</comment>
<comment type="catalytic activity">
    <reaction evidence="2">
        <text>1-(9Z-octadecenoyl)-sn-glycero-3-phosphate + (5Z,8Z,11Z,14Z)-eicosatetraenoyl-CoA = 1-(9Z)-octadecenoyl-2-(5Z,8Z,11Z,14Z)-eicosatetraenoyl-sn-glycero-3-phosphate + CoA</text>
        <dbReference type="Rhea" id="RHEA:37443"/>
        <dbReference type="ChEBI" id="CHEBI:57287"/>
        <dbReference type="ChEBI" id="CHEBI:57368"/>
        <dbReference type="ChEBI" id="CHEBI:74544"/>
        <dbReference type="ChEBI" id="CHEBI:74928"/>
    </reaction>
    <physiologicalReaction direction="left-to-right" evidence="2">
        <dbReference type="Rhea" id="RHEA:37444"/>
    </physiologicalReaction>
</comment>
<comment type="catalytic activity">
    <reaction evidence="2">
        <text>(5Z,8Z,11Z,14Z)-eicosatetraenoyl-CoA + sn-glycerol 3-phosphate = 1-(5Z,8Z,11Z,14Z-eicosatetraenoyl)-sn-glycero-3-phosphate + CoA</text>
        <dbReference type="Rhea" id="RHEA:37463"/>
        <dbReference type="ChEBI" id="CHEBI:57287"/>
        <dbReference type="ChEBI" id="CHEBI:57368"/>
        <dbReference type="ChEBI" id="CHEBI:57597"/>
        <dbReference type="ChEBI" id="CHEBI:74938"/>
    </reaction>
    <physiologicalReaction direction="left-to-right" evidence="2">
        <dbReference type="Rhea" id="RHEA:37464"/>
    </physiologicalReaction>
</comment>
<comment type="activity regulation">
    <text evidence="2">Inhibited by N-ethylmaleimide (NEM).</text>
</comment>
<comment type="pathway">
    <text evidence="2">Phospholipid metabolism; CDP-diacylglycerol biosynthesis; CDP-diacylglycerol from sn-glycerol 3-phosphate: step 1/3.</text>
</comment>
<comment type="subunit">
    <text evidence="2">Interacts with PIWIL2.</text>
</comment>
<comment type="subcellular location">
    <subcellularLocation>
        <location evidence="2">Mitochondrion outer membrane</location>
        <topology evidence="2">Multi-pass membrane protein</topology>
    </subcellularLocation>
</comment>
<comment type="alternative products">
    <event type="alternative splicing"/>
    <isoform>
        <id>Q6NUI2-1</id>
        <name>1</name>
        <sequence type="displayed"/>
    </isoform>
    <isoform>
        <id>Q6NUI2-3</id>
        <name>2</name>
        <sequence type="described" ref="VSP_032453 VSP_032454"/>
    </isoform>
    <isoform>
        <id>Q6NUI2-4</id>
        <name>3</name>
        <sequence type="described" ref="VSP_032452"/>
    </isoform>
    <isoform>
        <id>Q6NUI2-5</id>
        <name>4</name>
        <sequence type="described" ref="VSP_032450 VSP_032451"/>
    </isoform>
</comment>
<comment type="domain">
    <text evidence="1">The HXXXXD motif is essential for acyltransferase activity and may constitute the binding site for the phosphate moiety of the glycerol-3-phosphate.</text>
</comment>
<comment type="similarity">
    <text evidence="6">Belongs to the GPAT/DAPAT family.</text>
</comment>
<comment type="sequence caution" evidence="6">
    <conflict type="erroneous initiation">
        <sequence resource="EMBL-CDS" id="AAH68596"/>
    </conflict>
</comment>
<comment type="sequence caution" evidence="6">
    <conflict type="erroneous initiation">
        <sequence resource="EMBL-CDS" id="BAD18392"/>
    </conflict>
</comment>
<organism>
    <name type="scientific">Homo sapiens</name>
    <name type="common">Human</name>
    <dbReference type="NCBI Taxonomy" id="9606"/>
    <lineage>
        <taxon>Eukaryota</taxon>
        <taxon>Metazoa</taxon>
        <taxon>Chordata</taxon>
        <taxon>Craniata</taxon>
        <taxon>Vertebrata</taxon>
        <taxon>Euteleostomi</taxon>
        <taxon>Mammalia</taxon>
        <taxon>Eutheria</taxon>
        <taxon>Euarchontoglires</taxon>
        <taxon>Primates</taxon>
        <taxon>Haplorrhini</taxon>
        <taxon>Catarrhini</taxon>
        <taxon>Hominidae</taxon>
        <taxon>Homo</taxon>
    </lineage>
</organism>
<accession>Q6NUI2</accession>
<accession>Q6P2E4</accession>
<accession>Q6ZNI3</accession>
<accession>Q6ZNI5</accession>
<accession>Q6ZWJ4</accession>
<gene>
    <name evidence="7" type="primary">GPAT2</name>
</gene>
<reference key="1">
    <citation type="journal article" date="2004" name="Nat. Genet.">
        <title>Complete sequencing and characterization of 21,243 full-length human cDNAs.</title>
        <authorList>
            <person name="Ota T."/>
            <person name="Suzuki Y."/>
            <person name="Nishikawa T."/>
            <person name="Otsuki T."/>
            <person name="Sugiyama T."/>
            <person name="Irie R."/>
            <person name="Wakamatsu A."/>
            <person name="Hayashi K."/>
            <person name="Sato H."/>
            <person name="Nagai K."/>
            <person name="Kimura K."/>
            <person name="Makita H."/>
            <person name="Sekine M."/>
            <person name="Obayashi M."/>
            <person name="Nishi T."/>
            <person name="Shibahara T."/>
            <person name="Tanaka T."/>
            <person name="Ishii S."/>
            <person name="Yamamoto J."/>
            <person name="Saito K."/>
            <person name="Kawai Y."/>
            <person name="Isono Y."/>
            <person name="Nakamura Y."/>
            <person name="Nagahari K."/>
            <person name="Murakami K."/>
            <person name="Yasuda T."/>
            <person name="Iwayanagi T."/>
            <person name="Wagatsuma M."/>
            <person name="Shiratori A."/>
            <person name="Sudo H."/>
            <person name="Hosoiri T."/>
            <person name="Kaku Y."/>
            <person name="Kodaira H."/>
            <person name="Kondo H."/>
            <person name="Sugawara M."/>
            <person name="Takahashi M."/>
            <person name="Kanda K."/>
            <person name="Yokoi T."/>
            <person name="Furuya T."/>
            <person name="Kikkawa E."/>
            <person name="Omura Y."/>
            <person name="Abe K."/>
            <person name="Kamihara K."/>
            <person name="Katsuta N."/>
            <person name="Sato K."/>
            <person name="Tanikawa M."/>
            <person name="Yamazaki M."/>
            <person name="Ninomiya K."/>
            <person name="Ishibashi T."/>
            <person name="Yamashita H."/>
            <person name="Murakawa K."/>
            <person name="Fujimori K."/>
            <person name="Tanai H."/>
            <person name="Kimata M."/>
            <person name="Watanabe M."/>
            <person name="Hiraoka S."/>
            <person name="Chiba Y."/>
            <person name="Ishida S."/>
            <person name="Ono Y."/>
            <person name="Takiguchi S."/>
            <person name="Watanabe S."/>
            <person name="Yosida M."/>
            <person name="Hotuta T."/>
            <person name="Kusano J."/>
            <person name="Kanehori K."/>
            <person name="Takahashi-Fujii A."/>
            <person name="Hara H."/>
            <person name="Tanase T.-O."/>
            <person name="Nomura Y."/>
            <person name="Togiya S."/>
            <person name="Komai F."/>
            <person name="Hara R."/>
            <person name="Takeuchi K."/>
            <person name="Arita M."/>
            <person name="Imose N."/>
            <person name="Musashino K."/>
            <person name="Yuuki H."/>
            <person name="Oshima A."/>
            <person name="Sasaki N."/>
            <person name="Aotsuka S."/>
            <person name="Yoshikawa Y."/>
            <person name="Matsunawa H."/>
            <person name="Ichihara T."/>
            <person name="Shiohata N."/>
            <person name="Sano S."/>
            <person name="Moriya S."/>
            <person name="Momiyama H."/>
            <person name="Satoh N."/>
            <person name="Takami S."/>
            <person name="Terashima Y."/>
            <person name="Suzuki O."/>
            <person name="Nakagawa S."/>
            <person name="Senoh A."/>
            <person name="Mizoguchi H."/>
            <person name="Goto Y."/>
            <person name="Shimizu F."/>
            <person name="Wakebe H."/>
            <person name="Hishigaki H."/>
            <person name="Watanabe T."/>
            <person name="Sugiyama A."/>
            <person name="Takemoto M."/>
            <person name="Kawakami B."/>
            <person name="Yamazaki M."/>
            <person name="Watanabe K."/>
            <person name="Kumagai A."/>
            <person name="Itakura S."/>
            <person name="Fukuzumi Y."/>
            <person name="Fujimori Y."/>
            <person name="Komiyama M."/>
            <person name="Tashiro H."/>
            <person name="Tanigami A."/>
            <person name="Fujiwara T."/>
            <person name="Ono T."/>
            <person name="Yamada K."/>
            <person name="Fujii Y."/>
            <person name="Ozaki K."/>
            <person name="Hirao M."/>
            <person name="Ohmori Y."/>
            <person name="Kawabata A."/>
            <person name="Hikiji T."/>
            <person name="Kobatake N."/>
            <person name="Inagaki H."/>
            <person name="Ikema Y."/>
            <person name="Okamoto S."/>
            <person name="Okitani R."/>
            <person name="Kawakami T."/>
            <person name="Noguchi S."/>
            <person name="Itoh T."/>
            <person name="Shigeta K."/>
            <person name="Senba T."/>
            <person name="Matsumura K."/>
            <person name="Nakajima Y."/>
            <person name="Mizuno T."/>
            <person name="Morinaga M."/>
            <person name="Sasaki M."/>
            <person name="Togashi T."/>
            <person name="Oyama M."/>
            <person name="Hata H."/>
            <person name="Watanabe M."/>
            <person name="Komatsu T."/>
            <person name="Mizushima-Sugano J."/>
            <person name="Satoh T."/>
            <person name="Shirai Y."/>
            <person name="Takahashi Y."/>
            <person name="Nakagawa K."/>
            <person name="Okumura K."/>
            <person name="Nagase T."/>
            <person name="Nomura N."/>
            <person name="Kikuchi H."/>
            <person name="Masuho Y."/>
            <person name="Yamashita R."/>
            <person name="Nakai K."/>
            <person name="Yada T."/>
            <person name="Nakamura Y."/>
            <person name="Ohara O."/>
            <person name="Isogai T."/>
            <person name="Sugano S."/>
        </authorList>
    </citation>
    <scope>NUCLEOTIDE SEQUENCE [LARGE SCALE MRNA] (ISOFORMS 2 AND 4)</scope>
    <scope>NUCLEOTIDE SEQUENCE [LARGE SCALE MRNA] OF 165-795 (ISOFORM 3)</scope>
    <source>
        <tissue>Brain</tissue>
        <tissue>Heart</tissue>
        <tissue>Testis</tissue>
    </source>
</reference>
<reference key="2">
    <citation type="journal article" date="2004" name="Genome Res.">
        <title>The status, quality, and expansion of the NIH full-length cDNA project: the Mammalian Gene Collection (MGC).</title>
        <authorList>
            <consortium name="The MGC Project Team"/>
        </authorList>
    </citation>
    <scope>NUCLEOTIDE SEQUENCE [LARGE SCALE MRNA] (ISOFORM 1)</scope>
    <source>
        <tissue>Testis</tissue>
    </source>
</reference>
<feature type="chain" id="PRO_0000325853" description="Glycerol-3-phosphate acyltransferase 2, mitochondrial">
    <location>
        <begin position="1"/>
        <end position="795"/>
    </location>
</feature>
<feature type="topological domain" description="Cytoplasmic" evidence="3">
    <location>
        <begin position="1"/>
        <end position="305"/>
    </location>
</feature>
<feature type="transmembrane region" description="Helical" evidence="3">
    <location>
        <begin position="306"/>
        <end position="332"/>
    </location>
</feature>
<feature type="topological domain" description="Mitochondrial intermembrane" evidence="3">
    <location>
        <begin position="333"/>
        <end position="449"/>
    </location>
</feature>
<feature type="transmembrane region" description="Helical" evidence="3">
    <location>
        <begin position="450"/>
        <end position="472"/>
    </location>
</feature>
<feature type="topological domain" description="Cytoplasmic" evidence="3">
    <location>
        <begin position="473"/>
        <end position="795"/>
    </location>
</feature>
<feature type="region of interest" description="Disordered" evidence="4">
    <location>
        <begin position="1"/>
        <end position="21"/>
    </location>
</feature>
<feature type="region of interest" description="Acyltransferase">
    <location>
        <begin position="180"/>
        <end position="331"/>
    </location>
</feature>
<feature type="short sequence motif" description="HXXXXD motif">
    <location>
        <begin position="205"/>
        <end position="210"/>
    </location>
</feature>
<feature type="compositionally biased region" description="Polar residues" evidence="4">
    <location>
        <begin position="9"/>
        <end position="18"/>
    </location>
</feature>
<feature type="modified residue" description="Phosphoserine" evidence="2">
    <location>
        <position position="656"/>
    </location>
</feature>
<feature type="modified residue" description="Phosphothreonine" evidence="2">
    <location>
        <position position="660"/>
    </location>
</feature>
<feature type="modified residue" description="Phosphoserine" evidence="2">
    <location>
        <position position="662"/>
    </location>
</feature>
<feature type="modified residue" description="Phosphoserine" evidence="2">
    <location>
        <position position="664"/>
    </location>
</feature>
<feature type="splice variant" id="VSP_032450" description="In isoform 4." evidence="5">
    <location>
        <begin position="1"/>
        <end position="216"/>
    </location>
</feature>
<feature type="splice variant" id="VSP_032451" description="In isoform 4." evidence="5">
    <location>
        <begin position="274"/>
        <end position="344"/>
    </location>
</feature>
<feature type="splice variant" id="VSP_032452" description="In isoform 3." evidence="5">
    <original>K</original>
    <variation>KGVFLSQ</variation>
    <location>
        <position position="476"/>
    </location>
</feature>
<feature type="splice variant" id="VSP_032453" description="In isoform 2." evidence="5">
    <original>TPGSRPACDTGRQRLSRKLLWKPSGDFTDSDSDDFGEAD</original>
    <variation>SWATQSSCSSSCRPPPRKKGSSSVRTQSSPSVLSGPSET</variation>
    <location>
        <begin position="633"/>
        <end position="671"/>
    </location>
</feature>
<feature type="splice variant" id="VSP_032454" description="In isoform 2." evidence="5">
    <location>
        <begin position="672"/>
        <end position="795"/>
    </location>
</feature>
<feature type="sequence conflict" description="In Ref. 2; AAH68596." evidence="6" ref="2">
    <original>P</original>
    <variation>Q</variation>
    <location>
        <position position="336"/>
    </location>
</feature>
<feature type="sequence conflict" description="In Ref. 1; BAC85508." evidence="6" ref="1">
    <original>F</original>
    <variation>L</variation>
    <location>
        <position position="689"/>
    </location>
</feature>
<name>GPAT2_HUMAN</name>
<evidence type="ECO:0000250" key="1"/>
<evidence type="ECO:0000250" key="2">
    <source>
        <dbReference type="UniProtKB" id="Q14DK4"/>
    </source>
</evidence>
<evidence type="ECO:0000255" key="3"/>
<evidence type="ECO:0000256" key="4">
    <source>
        <dbReference type="SAM" id="MobiDB-lite"/>
    </source>
</evidence>
<evidence type="ECO:0000303" key="5">
    <source>
    </source>
</evidence>
<evidence type="ECO:0000305" key="6"/>
<evidence type="ECO:0000312" key="7">
    <source>
        <dbReference type="HGNC" id="HGNC:27168"/>
    </source>
</evidence>
<sequence>MATMLEGRCQTQPRSSPSGREASLWSSGFGMKLEAVTPFLGKYRPFVGRCCQTCTPKSWESLFHRSITDLGFCNVILVKEENTRFRGWLVRRLCYFLWSLEQHIPPCQDVPQKIMESTGVQNLLSGRVPGGTGEGQVPDLVKKEVQRILGHIQAPPRPFLVRLFSWALLRFLNCLFLNVQLHKGQMKMVQKAAQAGLPLVLLSTHKTLLDGILLPFMLLSQGLGVLRVAWDSRACSPALRALLRKLGGLFLPPEASLSLDSSEGLLARAVVQAVIEQLLVSGQPLLIFLEEPPGALGPRLSALGQAWVGFVVQAVQVGIVPDALLVPVAVTYDLVPDAPCDIDHASAPLGLWTGALAVLRSLWSRWGCSHRICSRVHLAQPFSLQEYIVSARSCWGGRQTLEQLLQPIVLGQCTAVPDTEKEQEWTPITGPLLALKEEDQLLVRRLSCHVLSASVGSSAVMSTAIMATLLLFKHQKLLGEFSWLTEEILLRGFDVGFSGQLRSLLQHSLSLLRAHVALLRIRQGDLLVVPQPGPGLTHLAQLSAELLPVFLSEAVGACAVRGLLAGRVPPQGPWELQGILLLSQNELYRQILLLMHLLPQDLLLLKPCQSSYCYCQEVLDRLIQCGLLVAEETPGSRPACDTGRQRLSRKLLWKPSGDFTDSDSDDFGEADGRYFRLSQQSHCPDFFLFLCRLLSPLLKAFAQAAAFLRQGQLPDTELGYTEQLFQFLQATAQEEGIFECADPKLAISAVWTFRDLGVLQQTPSPAGPRLHLSPTFASLDNQEKLEQFIRQFICS</sequence>
<proteinExistence type="evidence at protein level"/>
<dbReference type="EC" id="2.3.1.15" evidence="2"/>
<dbReference type="EC" id="2.3.1.51" evidence="2"/>
<dbReference type="EMBL" id="AK122734">
    <property type="protein sequence ID" value="BAC85508.1"/>
    <property type="molecule type" value="mRNA"/>
</dbReference>
<dbReference type="EMBL" id="AK131194">
    <property type="protein sequence ID" value="BAD18390.1"/>
    <property type="molecule type" value="mRNA"/>
</dbReference>
<dbReference type="EMBL" id="AK131197">
    <property type="protein sequence ID" value="BAD18392.1"/>
    <property type="status" value="ALT_INIT"/>
    <property type="molecule type" value="mRNA"/>
</dbReference>
<dbReference type="EMBL" id="BC068596">
    <property type="protein sequence ID" value="AAH68596.1"/>
    <property type="status" value="ALT_INIT"/>
    <property type="molecule type" value="mRNA"/>
</dbReference>
<dbReference type="CCDS" id="CCDS42714.1">
    <molecule id="Q6NUI2-1"/>
</dbReference>
<dbReference type="CCDS" id="CCDS92810.1">
    <molecule id="Q6NUI2-3"/>
</dbReference>
<dbReference type="CCDS" id="CCDS92811.1">
    <molecule id="Q6NUI2-4"/>
</dbReference>
<dbReference type="RefSeq" id="NP_001308454.1">
    <molecule id="Q6NUI2-4"/>
    <property type="nucleotide sequence ID" value="NM_001321525.2"/>
</dbReference>
<dbReference type="RefSeq" id="NP_001308455.1">
    <molecule id="Q6NUI2-4"/>
    <property type="nucleotide sequence ID" value="NM_001321526.2"/>
</dbReference>
<dbReference type="RefSeq" id="NP_001308456.1">
    <molecule id="Q6NUI2-4"/>
    <property type="nucleotide sequence ID" value="NM_001321527.2"/>
</dbReference>
<dbReference type="RefSeq" id="NP_001308459.1">
    <property type="nucleotide sequence ID" value="NM_001321530.1"/>
</dbReference>
<dbReference type="RefSeq" id="NP_001308460.1">
    <molecule id="Q6NUI2-3"/>
    <property type="nucleotide sequence ID" value="NM_001321531.2"/>
</dbReference>
<dbReference type="RefSeq" id="NP_997211.2">
    <molecule id="Q6NUI2-1"/>
    <property type="nucleotide sequence ID" value="NM_207328.4"/>
</dbReference>
<dbReference type="RefSeq" id="XP_005263945.1">
    <property type="nucleotide sequence ID" value="XM_005263888.3"/>
</dbReference>
<dbReference type="RefSeq" id="XP_016858913.1">
    <molecule id="Q6NUI2-4"/>
    <property type="nucleotide sequence ID" value="XM_017003424.2"/>
</dbReference>
<dbReference type="RefSeq" id="XP_047299422.1">
    <molecule id="Q6NUI2-1"/>
    <property type="nucleotide sequence ID" value="XM_047443466.1"/>
</dbReference>
<dbReference type="RefSeq" id="XP_047299423.1">
    <molecule id="Q6NUI2-1"/>
    <property type="nucleotide sequence ID" value="XM_047443467.1"/>
</dbReference>
<dbReference type="RefSeq" id="XP_047299424.1">
    <molecule id="Q6NUI2-1"/>
    <property type="nucleotide sequence ID" value="XM_047443468.1"/>
</dbReference>
<dbReference type="RefSeq" id="XP_047299427.1">
    <molecule id="Q6NUI2-3"/>
    <property type="nucleotide sequence ID" value="XM_047443471.1"/>
</dbReference>
<dbReference type="SMR" id="Q6NUI2"/>
<dbReference type="BioGRID" id="127324">
    <property type="interactions" value="73"/>
</dbReference>
<dbReference type="FunCoup" id="Q6NUI2">
    <property type="interactions" value="131"/>
</dbReference>
<dbReference type="IntAct" id="Q6NUI2">
    <property type="interactions" value="33"/>
</dbReference>
<dbReference type="STRING" id="9606.ENSP00000389395"/>
<dbReference type="iPTMnet" id="Q6NUI2"/>
<dbReference type="PhosphoSitePlus" id="Q6NUI2"/>
<dbReference type="BioMuta" id="GPAT2"/>
<dbReference type="DMDM" id="172046129"/>
<dbReference type="jPOST" id="Q6NUI2"/>
<dbReference type="MassIVE" id="Q6NUI2"/>
<dbReference type="PaxDb" id="9606-ENSP00000389395"/>
<dbReference type="PeptideAtlas" id="Q6NUI2"/>
<dbReference type="ProteomicsDB" id="66676">
    <molecule id="Q6NUI2-1"/>
</dbReference>
<dbReference type="ProteomicsDB" id="66677">
    <molecule id="Q6NUI2-3"/>
</dbReference>
<dbReference type="ProteomicsDB" id="66678">
    <molecule id="Q6NUI2-4"/>
</dbReference>
<dbReference type="ProteomicsDB" id="66679">
    <molecule id="Q6NUI2-5"/>
</dbReference>
<dbReference type="Antibodypedia" id="32374">
    <property type="antibodies" value="50 antibodies from 10 providers"/>
</dbReference>
<dbReference type="DNASU" id="150763"/>
<dbReference type="Ensembl" id="ENST00000359548.8">
    <molecule id="Q6NUI2-1"/>
    <property type="protein sequence ID" value="ENSP00000352547.4"/>
    <property type="gene ID" value="ENSG00000186281.13"/>
</dbReference>
<dbReference type="Ensembl" id="ENST00000434632.6">
    <molecule id="Q6NUI2-4"/>
    <property type="protein sequence ID" value="ENSP00000389395.2"/>
    <property type="gene ID" value="ENSG00000186281.13"/>
</dbReference>
<dbReference type="Ensembl" id="ENST00000687910.1">
    <molecule id="Q6NUI2-3"/>
    <property type="protein sequence ID" value="ENSP00000509192.1"/>
    <property type="gene ID" value="ENSG00000186281.13"/>
</dbReference>
<dbReference type="Ensembl" id="ENST00000691940.1">
    <molecule id="Q6NUI2-1"/>
    <property type="protein sequence ID" value="ENSP00000509624.1"/>
    <property type="gene ID" value="ENSG00000186281.13"/>
</dbReference>
<dbReference type="GeneID" id="150763"/>
<dbReference type="KEGG" id="hsa:150763"/>
<dbReference type="MANE-Select" id="ENST00000434632.6">
    <molecule id="Q6NUI2-4"/>
    <property type="protein sequence ID" value="ENSP00000389395.2"/>
    <property type="RefSeq nucleotide sequence ID" value="NM_001321527.2"/>
    <property type="RefSeq protein sequence ID" value="NP_001308456.1"/>
</dbReference>
<dbReference type="UCSC" id="uc002svf.4">
    <molecule id="Q6NUI2-1"/>
    <property type="organism name" value="human"/>
</dbReference>
<dbReference type="AGR" id="HGNC:27168"/>
<dbReference type="CTD" id="150763"/>
<dbReference type="DisGeNET" id="150763"/>
<dbReference type="GeneCards" id="GPAT2"/>
<dbReference type="HGNC" id="HGNC:27168">
    <property type="gene designation" value="GPAT2"/>
</dbReference>
<dbReference type="HPA" id="ENSG00000186281">
    <property type="expression patterns" value="Low tissue specificity"/>
</dbReference>
<dbReference type="MIM" id="616431">
    <property type="type" value="gene"/>
</dbReference>
<dbReference type="neXtProt" id="NX_Q6NUI2"/>
<dbReference type="OpenTargets" id="ENSG00000186281"/>
<dbReference type="PharmGKB" id="PA165696677"/>
<dbReference type="VEuPathDB" id="HostDB:ENSG00000186281"/>
<dbReference type="eggNOG" id="KOG3729">
    <property type="taxonomic scope" value="Eukaryota"/>
</dbReference>
<dbReference type="GeneTree" id="ENSGT00520000055570"/>
<dbReference type="InParanoid" id="Q6NUI2"/>
<dbReference type="OMA" id="QEYTTNA"/>
<dbReference type="OrthoDB" id="5962536at2759"/>
<dbReference type="PAN-GO" id="Q6NUI2">
    <property type="GO annotations" value="7 GO annotations based on evolutionary models"/>
</dbReference>
<dbReference type="PhylomeDB" id="Q6NUI2"/>
<dbReference type="TreeFam" id="TF313360"/>
<dbReference type="BRENDA" id="2.3.1.15">
    <property type="organism ID" value="2681"/>
</dbReference>
<dbReference type="PathwayCommons" id="Q6NUI2"/>
<dbReference type="Reactome" id="R-HSA-1483166">
    <property type="pathway name" value="Synthesis of PA"/>
</dbReference>
<dbReference type="Reactome" id="R-HSA-75109">
    <property type="pathway name" value="Triglyceride biosynthesis"/>
</dbReference>
<dbReference type="UniPathway" id="UPA00557">
    <property type="reaction ID" value="UER00612"/>
</dbReference>
<dbReference type="BioGRID-ORCS" id="150763">
    <property type="hits" value="85 hits in 1136 CRISPR screens"/>
</dbReference>
<dbReference type="GenomeRNAi" id="150763"/>
<dbReference type="Pharos" id="Q6NUI2">
    <property type="development level" value="Tbio"/>
</dbReference>
<dbReference type="PRO" id="PR:Q6NUI2"/>
<dbReference type="Proteomes" id="UP000005640">
    <property type="component" value="Chromosome 2"/>
</dbReference>
<dbReference type="RNAct" id="Q6NUI2">
    <property type="molecule type" value="protein"/>
</dbReference>
<dbReference type="Bgee" id="ENSG00000186281">
    <property type="expression patterns" value="Expressed in apex of heart and 99 other cell types or tissues"/>
</dbReference>
<dbReference type="ExpressionAtlas" id="Q6NUI2">
    <property type="expression patterns" value="baseline and differential"/>
</dbReference>
<dbReference type="GO" id="GO:0005741">
    <property type="term" value="C:mitochondrial outer membrane"/>
    <property type="evidence" value="ECO:0000250"/>
    <property type="project" value="UniProtKB"/>
</dbReference>
<dbReference type="GO" id="GO:0005739">
    <property type="term" value="C:mitochondrion"/>
    <property type="evidence" value="ECO:0006056"/>
    <property type="project" value="FlyBase"/>
</dbReference>
<dbReference type="GO" id="GO:0003841">
    <property type="term" value="F:1-acylglycerol-3-phosphate O-acyltransferase activity"/>
    <property type="evidence" value="ECO:0000250"/>
    <property type="project" value="UniProtKB"/>
</dbReference>
<dbReference type="GO" id="GO:0004366">
    <property type="term" value="F:glycerol-3-phosphate O-acyltransferase activity"/>
    <property type="evidence" value="ECO:0000269"/>
    <property type="project" value="Reactome"/>
</dbReference>
<dbReference type="GO" id="GO:0016024">
    <property type="term" value="P:CDP-diacylglycerol biosynthetic process"/>
    <property type="evidence" value="ECO:0007669"/>
    <property type="project" value="UniProtKB-UniPathway"/>
</dbReference>
<dbReference type="GO" id="GO:0006072">
    <property type="term" value="P:glycerol-3-phosphate metabolic process"/>
    <property type="evidence" value="ECO:0000250"/>
    <property type="project" value="UniProtKB"/>
</dbReference>
<dbReference type="GO" id="GO:0006650">
    <property type="term" value="P:glycerophospholipid metabolic process"/>
    <property type="evidence" value="ECO:0000318"/>
    <property type="project" value="GO_Central"/>
</dbReference>
<dbReference type="GO" id="GO:0006654">
    <property type="term" value="P:phosphatidic acid biosynthetic process"/>
    <property type="evidence" value="ECO:0000250"/>
    <property type="project" value="UniProtKB"/>
</dbReference>
<dbReference type="GO" id="GO:0034587">
    <property type="term" value="P:piRNA processing"/>
    <property type="evidence" value="ECO:0000250"/>
    <property type="project" value="UniProtKB"/>
</dbReference>
<dbReference type="GO" id="GO:0019432">
    <property type="term" value="P:triglyceride biosynthetic process"/>
    <property type="evidence" value="ECO:0000250"/>
    <property type="project" value="UniProtKB"/>
</dbReference>
<dbReference type="CDD" id="cd07993">
    <property type="entry name" value="LPLAT_DHAPAT-like"/>
    <property type="match status" value="1"/>
</dbReference>
<dbReference type="InterPro" id="IPR022284">
    <property type="entry name" value="GPAT/DHAPAT"/>
</dbReference>
<dbReference type="InterPro" id="IPR045520">
    <property type="entry name" value="GPAT/DHAPAT_C"/>
</dbReference>
<dbReference type="InterPro" id="IPR041728">
    <property type="entry name" value="GPAT/DHAPAT_LPLAT"/>
</dbReference>
<dbReference type="InterPro" id="IPR002123">
    <property type="entry name" value="Plipid/glycerol_acylTrfase"/>
</dbReference>
<dbReference type="PANTHER" id="PTHR12563">
    <property type="entry name" value="GLYCEROL-3-PHOSPHATE ACYLTRANSFERASE"/>
    <property type="match status" value="1"/>
</dbReference>
<dbReference type="PANTHER" id="PTHR12563:SF15">
    <property type="entry name" value="GLYCEROL-3-PHOSPHATE ACYLTRANSFERASE 2, MITOCHONDRIAL"/>
    <property type="match status" value="1"/>
</dbReference>
<dbReference type="Pfam" id="PF19277">
    <property type="entry name" value="GPAT_C"/>
    <property type="match status" value="1"/>
</dbReference>
<dbReference type="SMART" id="SM00563">
    <property type="entry name" value="PlsC"/>
    <property type="match status" value="1"/>
</dbReference>
<dbReference type="SUPFAM" id="SSF69593">
    <property type="entry name" value="Glycerol-3-phosphate (1)-acyltransferase"/>
    <property type="match status" value="1"/>
</dbReference>
<keyword id="KW-0012">Acyltransferase</keyword>
<keyword id="KW-0025">Alternative splicing</keyword>
<keyword id="KW-0444">Lipid biosynthesis</keyword>
<keyword id="KW-0443">Lipid metabolism</keyword>
<keyword id="KW-0472">Membrane</keyword>
<keyword id="KW-0496">Mitochondrion</keyword>
<keyword id="KW-1000">Mitochondrion outer membrane</keyword>
<keyword id="KW-0594">Phospholipid biosynthesis</keyword>
<keyword id="KW-1208">Phospholipid metabolism</keyword>
<keyword id="KW-0597">Phosphoprotein</keyword>
<keyword id="KW-1267">Proteomics identification</keyword>
<keyword id="KW-1185">Reference proteome</keyword>
<keyword id="KW-0808">Transferase</keyword>
<keyword id="KW-0812">Transmembrane</keyword>
<keyword id="KW-1133">Transmembrane helix</keyword>